<feature type="signal peptide" evidence="2">
    <location>
        <begin position="1"/>
        <end position="17"/>
    </location>
</feature>
<feature type="propeptide" id="PRO_0000397746" evidence="1">
    <location>
        <begin position="18"/>
        <end position="183"/>
    </location>
</feature>
<feature type="chain" id="PRO_0000397747" description="Probable neutral protease 2 homolog ARB_04769">
    <location>
        <begin position="184"/>
        <end position="356"/>
    </location>
</feature>
<feature type="active site" evidence="3">
    <location>
        <position position="312"/>
    </location>
</feature>
<feature type="binding site" evidence="3">
    <location>
        <position position="311"/>
    </location>
    <ligand>
        <name>Zn(2+)</name>
        <dbReference type="ChEBI" id="CHEBI:29105"/>
        <note>catalytic</note>
    </ligand>
</feature>
<feature type="binding site" evidence="3">
    <location>
        <position position="315"/>
    </location>
    <ligand>
        <name>Zn(2+)</name>
        <dbReference type="ChEBI" id="CHEBI:29105"/>
        <note>catalytic</note>
    </ligand>
</feature>
<feature type="binding site" evidence="3">
    <location>
        <position position="326"/>
    </location>
    <ligand>
        <name>Zn(2+)</name>
        <dbReference type="ChEBI" id="CHEBI:29105"/>
        <note>catalytic</note>
    </ligand>
</feature>
<feature type="glycosylation site" description="N-linked (GlcNAc...) asparagine" evidence="2">
    <location>
        <position position="205"/>
    </location>
</feature>
<feature type="disulfide bond" evidence="1">
    <location>
        <begin position="191"/>
        <end position="262"/>
    </location>
</feature>
<feature type="disulfide bond" evidence="1">
    <location>
        <begin position="269"/>
        <end position="287"/>
    </location>
</feature>
<protein>
    <recommendedName>
        <fullName>Probable neutral protease 2 homolog ARB_04769</fullName>
        <ecNumber>3.4.24.39</ecNumber>
    </recommendedName>
    <alternativeName>
        <fullName>Deuterolysin ARB_04769</fullName>
    </alternativeName>
</protein>
<proteinExistence type="inferred from homology"/>
<sequence>MQFTALLAALGAPLALAASIPAAAHNHSMIDVQLAATGNSMIKATITNTGDRTLNLLKFNTIMDEHPTRKVMVYQDGAEVQFTGMLPRYKMSDLTPEYFVNLGPKASVEHSFDLAATHDLSRGGKIVVKAHGMVPTAEENATTITGHTLYESNELTMDVDGKQAAAVEQAMGGDDSTGVIDKRSNIVTSSCRGSQLRVLQTALSNASRLSRAAASAAQRNPSKMREYFKTADSRTVQKVASRFLSVARESSSGSTGRTTYYCNDNRGGCHPGVLAYTLPSKNQVFNCPSYYQLPALNNRCHGQDQATTTLHELTHNPAVVTPFCEDLGYGYQRVSALPASKAIQNADTYSLFANGM</sequence>
<dbReference type="EC" id="3.4.24.39"/>
<dbReference type="EMBL" id="ABSU01000002">
    <property type="protein sequence ID" value="EFE35835.1"/>
    <property type="molecule type" value="Genomic_DNA"/>
</dbReference>
<dbReference type="RefSeq" id="XP_003016480.1">
    <property type="nucleotide sequence ID" value="XM_003016434.1"/>
</dbReference>
<dbReference type="SMR" id="D4AM79"/>
<dbReference type="STRING" id="663331.D4AM79"/>
<dbReference type="MEROPS" id="M35.001"/>
<dbReference type="GeneID" id="9521962"/>
<dbReference type="KEGG" id="abe:ARB_04769"/>
<dbReference type="eggNOG" id="ENOG502SGF5">
    <property type="taxonomic scope" value="Eukaryota"/>
</dbReference>
<dbReference type="HOGENOM" id="CLU_039313_1_0_1"/>
<dbReference type="OMA" id="NHSMIDV"/>
<dbReference type="Proteomes" id="UP000008866">
    <property type="component" value="Unassembled WGS sequence"/>
</dbReference>
<dbReference type="GO" id="GO:0005576">
    <property type="term" value="C:extracellular region"/>
    <property type="evidence" value="ECO:0007669"/>
    <property type="project" value="UniProtKB-SubCell"/>
</dbReference>
<dbReference type="GO" id="GO:0046872">
    <property type="term" value="F:metal ion binding"/>
    <property type="evidence" value="ECO:0007669"/>
    <property type="project" value="UniProtKB-KW"/>
</dbReference>
<dbReference type="GO" id="GO:0004222">
    <property type="term" value="F:metalloendopeptidase activity"/>
    <property type="evidence" value="ECO:0007669"/>
    <property type="project" value="InterPro"/>
</dbReference>
<dbReference type="GO" id="GO:0006508">
    <property type="term" value="P:proteolysis"/>
    <property type="evidence" value="ECO:0007669"/>
    <property type="project" value="UniProtKB-KW"/>
</dbReference>
<dbReference type="CDD" id="cd11008">
    <property type="entry name" value="M35_deuterolysin_like"/>
    <property type="match status" value="1"/>
</dbReference>
<dbReference type="Gene3D" id="2.60.40.2970">
    <property type="match status" value="1"/>
</dbReference>
<dbReference type="Gene3D" id="3.40.390.10">
    <property type="entry name" value="Collagenase (Catalytic Domain)"/>
    <property type="match status" value="1"/>
</dbReference>
<dbReference type="InterPro" id="IPR050414">
    <property type="entry name" value="Fungal_M35_metalloproteases"/>
</dbReference>
<dbReference type="InterPro" id="IPR024079">
    <property type="entry name" value="MetalloPept_cat_dom_sf"/>
</dbReference>
<dbReference type="InterPro" id="IPR001384">
    <property type="entry name" value="Peptidase_M35"/>
</dbReference>
<dbReference type="PANTHER" id="PTHR37016">
    <property type="match status" value="1"/>
</dbReference>
<dbReference type="PANTHER" id="PTHR37016:SF3">
    <property type="entry name" value="NEUTRAL PROTEASE 2-RELATED"/>
    <property type="match status" value="1"/>
</dbReference>
<dbReference type="Pfam" id="PF02102">
    <property type="entry name" value="Peptidase_M35"/>
    <property type="match status" value="1"/>
</dbReference>
<dbReference type="PRINTS" id="PR00768">
    <property type="entry name" value="DEUTEROLYSIN"/>
</dbReference>
<dbReference type="SUPFAM" id="SSF55486">
    <property type="entry name" value="Metalloproteases ('zincins'), catalytic domain"/>
    <property type="match status" value="1"/>
</dbReference>
<dbReference type="PROSITE" id="PS00142">
    <property type="entry name" value="ZINC_PROTEASE"/>
    <property type="match status" value="1"/>
</dbReference>
<comment type="function">
    <text evidence="1">Probable secreted metalloprotease that shows high activities on basic nuclear substrates such as histone and protamine (By similarity). May be involved in virulence.</text>
</comment>
<comment type="catalytic activity">
    <reaction>
        <text>Preferential cleavage of bonds with hydrophobic residues in P1'. Also 3-Asn-|-Gln-4 and 8-Gly-|-Ser-9 bonds in insulin B chain.</text>
        <dbReference type="EC" id="3.4.24.39"/>
    </reaction>
</comment>
<comment type="cofactor">
    <cofactor evidence="1">
        <name>Zn(2+)</name>
        <dbReference type="ChEBI" id="CHEBI:29105"/>
    </cofactor>
    <text evidence="1">Binds 1 zinc ion per subunit.</text>
</comment>
<comment type="subcellular location">
    <subcellularLocation>
        <location evidence="4">Secreted</location>
    </subcellularLocation>
</comment>
<comment type="similarity">
    <text evidence="4">Belongs to the peptidase M35 family.</text>
</comment>
<evidence type="ECO:0000250" key="1"/>
<evidence type="ECO:0000255" key="2"/>
<evidence type="ECO:0000255" key="3">
    <source>
        <dbReference type="PROSITE-ProRule" id="PRU10095"/>
    </source>
</evidence>
<evidence type="ECO:0000305" key="4"/>
<reference key="1">
    <citation type="journal article" date="2011" name="Genome Biol.">
        <title>Comparative and functional genomics provide insights into the pathogenicity of dermatophytic fungi.</title>
        <authorList>
            <person name="Burmester A."/>
            <person name="Shelest E."/>
            <person name="Gloeckner G."/>
            <person name="Heddergott C."/>
            <person name="Schindler S."/>
            <person name="Staib P."/>
            <person name="Heidel A."/>
            <person name="Felder M."/>
            <person name="Petzold A."/>
            <person name="Szafranski K."/>
            <person name="Feuermann M."/>
            <person name="Pedruzzi I."/>
            <person name="Priebe S."/>
            <person name="Groth M."/>
            <person name="Winkler R."/>
            <person name="Li W."/>
            <person name="Kniemeyer O."/>
            <person name="Schroeckh V."/>
            <person name="Hertweck C."/>
            <person name="Hube B."/>
            <person name="White T.C."/>
            <person name="Platzer M."/>
            <person name="Guthke R."/>
            <person name="Heitman J."/>
            <person name="Woestemeyer J."/>
            <person name="Zipfel P.F."/>
            <person name="Monod M."/>
            <person name="Brakhage A.A."/>
        </authorList>
    </citation>
    <scope>NUCLEOTIDE SEQUENCE [LARGE SCALE GENOMIC DNA]</scope>
    <source>
        <strain>ATCC MYA-4681 / CBS 112371</strain>
    </source>
</reference>
<keyword id="KW-0165">Cleavage on pair of basic residues</keyword>
<keyword id="KW-1015">Disulfide bond</keyword>
<keyword id="KW-0325">Glycoprotein</keyword>
<keyword id="KW-0378">Hydrolase</keyword>
<keyword id="KW-0479">Metal-binding</keyword>
<keyword id="KW-0482">Metalloprotease</keyword>
<keyword id="KW-0645">Protease</keyword>
<keyword id="KW-1185">Reference proteome</keyword>
<keyword id="KW-0964">Secreted</keyword>
<keyword id="KW-0732">Signal</keyword>
<keyword id="KW-0843">Virulence</keyword>
<keyword id="KW-0862">Zinc</keyword>
<keyword id="KW-0865">Zymogen</keyword>
<organism>
    <name type="scientific">Arthroderma benhamiae (strain ATCC MYA-4681 / CBS 112371)</name>
    <name type="common">Trichophyton mentagrophytes</name>
    <dbReference type="NCBI Taxonomy" id="663331"/>
    <lineage>
        <taxon>Eukaryota</taxon>
        <taxon>Fungi</taxon>
        <taxon>Dikarya</taxon>
        <taxon>Ascomycota</taxon>
        <taxon>Pezizomycotina</taxon>
        <taxon>Eurotiomycetes</taxon>
        <taxon>Eurotiomycetidae</taxon>
        <taxon>Onygenales</taxon>
        <taxon>Arthrodermataceae</taxon>
        <taxon>Trichophyton</taxon>
    </lineage>
</organism>
<name>NPIIC_ARTBC</name>
<gene>
    <name type="ORF">ARB_04769</name>
</gene>
<accession>D4AM79</accession>